<feature type="chain" id="PRO_0000401090" description="Movement and silencing protein TGBp1">
    <location>
        <begin position="1"/>
        <end position="223"/>
    </location>
</feature>
<feature type="domain" description="(+)RNA virus helicase ATP-binding">
    <location>
        <begin position="1"/>
        <end position="136"/>
    </location>
</feature>
<feature type="domain" description="(+)RNA virus helicase C-terminal">
    <location>
        <begin position="137"/>
        <end position="223"/>
    </location>
</feature>
<organismHost>
    <name type="scientific">Crataegus</name>
    <name type="common">hawthorn</name>
    <dbReference type="NCBI Taxonomy" id="23159"/>
</organismHost>
<organismHost>
    <name type="scientific">Malus sieboldii</name>
    <dbReference type="NCBI Taxonomy" id="106566"/>
</organismHost>
<organismHost>
    <name type="scientific">Malus sylvestris</name>
    <name type="common">European crab apple</name>
    <dbReference type="NCBI Taxonomy" id="3752"/>
</organismHost>
<organismHost>
    <name type="scientific">Pyrus communis</name>
    <name type="common">Pear</name>
    <name type="synonym">Pyrus domestica</name>
    <dbReference type="NCBI Taxonomy" id="23211"/>
</organismHost>
<accession>Q64963</accession>
<comment type="function">
    <text evidence="1">Transports viral genome to neighboring plant cells directly through plasmosdesmata, without any budding. The movement protein allows efficient cell to cell propagation, by bypassing the host cell wall barrier. Increases plasmodesma size exclusion limit. Acts as a suppressor of RNA-mediated gene silencing, also known as post-transcriptional gene silencing (PTGS), a mechanism of plant viral defense that limits the accumulation of viral RNAs (By similarity).</text>
</comment>
<comment type="subunit">
    <text evidence="1">Homodimer and homooligomer. Interacts with capsid protein. Interacts with host AGO1; this interaction targets the host protein for degradation, thereby suppressing the antiviral RNA silencing (By similarity).</text>
</comment>
<comment type="subcellular location">
    <subcellularLocation>
        <location evidence="1">Host cytoplasm</location>
    </subcellularLocation>
</comment>
<comment type="miscellaneous">
    <text>TGBp1, TGBp2 and TGBp3 seem to act together for cell-to-cell propagation. TGBp1 is the main movement protein that physically cross the plasmodesma with the viral genome. TGBp2 and TGBp3 would facilitate TGBp1 function.</text>
</comment>
<comment type="similarity">
    <text evidence="2">Belongs to the Tymovirales TGBp1 protein family.</text>
</comment>
<organism>
    <name type="scientific">Apple stem pitting virus (isolate PA66)</name>
    <name type="common">ASPV</name>
    <dbReference type="NCBI Taxonomy" id="651356"/>
    <lineage>
        <taxon>Viruses</taxon>
        <taxon>Riboviria</taxon>
        <taxon>Orthornavirae</taxon>
        <taxon>Kitrinoviricota</taxon>
        <taxon>Alsuviricetes</taxon>
        <taxon>Tymovirales</taxon>
        <taxon>Betaflexiviridae</taxon>
        <taxon>Quinvirinae</taxon>
        <taxon>Foveavirus</taxon>
        <taxon>Foveavirus mali</taxon>
    </lineage>
</organism>
<protein>
    <recommendedName>
        <fullName>Movement and silencing protein TGBp1</fullName>
    </recommendedName>
    <alternativeName>
        <fullName>25 kDa protein</fullName>
    </alternativeName>
    <alternativeName>
        <fullName>Silencing suppressor P25</fullName>
    </alternativeName>
    <alternativeName>
        <fullName>Triple gene block 1 protein</fullName>
        <shortName>TGBp1</shortName>
    </alternativeName>
</protein>
<sequence>METVLSLLNEFGFERTVEPLSDPIVVHAVPGSGKTTLIKQALIRNNNIEAVTFGVPEKANIHGTYIKKARQGQRGRGNYSILDEYLSGEYSTGFNCLFSDPYQNHGDCLRAHFIGRCSHRFGRQTVQILRDLGYNIASSKEDIVEKKNIFQLIEPEGVIICLEKGVEDFLKWHSVEYKFPCQVRGATFDIVTFIHEKPLEELVGPDLFVALTRHRSKLVLVSN</sequence>
<reference key="1">
    <citation type="journal article" date="1994" name="J. Gen. Virol.">
        <title>Nucleotide sequences of apple stem pitting virus and of the coat protein gene of a similar virus from pear associated with vein yellows disease and their relationship with potex- and carlaviruses.</title>
        <authorList>
            <person name="Jelkmann W."/>
        </authorList>
    </citation>
    <scope>NUCLEOTIDE SEQUENCE [GENOMIC RNA]</scope>
</reference>
<evidence type="ECO:0000250" key="1"/>
<evidence type="ECO:0000305" key="2"/>
<name>TGB1_ASPVP</name>
<dbReference type="EMBL" id="D21829">
    <property type="protein sequence ID" value="BAA04854.1"/>
    <property type="molecule type" value="Genomic_RNA"/>
</dbReference>
<dbReference type="RefSeq" id="NP_604465.1">
    <property type="nucleotide sequence ID" value="NC_003462.2"/>
</dbReference>
<dbReference type="KEGG" id="vg:935273"/>
<dbReference type="Proteomes" id="UP000000678">
    <property type="component" value="Segment"/>
</dbReference>
<dbReference type="GO" id="GO:0030430">
    <property type="term" value="C:host cell cytoplasm"/>
    <property type="evidence" value="ECO:0007669"/>
    <property type="project" value="UniProtKB-SubCell"/>
</dbReference>
<dbReference type="GO" id="GO:0005524">
    <property type="term" value="F:ATP binding"/>
    <property type="evidence" value="ECO:0007669"/>
    <property type="project" value="InterPro"/>
</dbReference>
<dbReference type="GO" id="GO:0003723">
    <property type="term" value="F:RNA binding"/>
    <property type="evidence" value="ECO:0007669"/>
    <property type="project" value="UniProtKB-KW"/>
</dbReference>
<dbReference type="GO" id="GO:0052170">
    <property type="term" value="P:symbiont-mediated suppression of host innate immune response"/>
    <property type="evidence" value="ECO:0007669"/>
    <property type="project" value="UniProtKB-KW"/>
</dbReference>
<dbReference type="GO" id="GO:0046740">
    <property type="term" value="P:transport of virus in host, cell to cell"/>
    <property type="evidence" value="ECO:0007669"/>
    <property type="project" value="UniProtKB-KW"/>
</dbReference>
<dbReference type="InterPro" id="IPR027351">
    <property type="entry name" value="(+)RNA_virus_helicase_core_dom"/>
</dbReference>
<dbReference type="InterPro" id="IPR027417">
    <property type="entry name" value="P-loop_NTPase"/>
</dbReference>
<dbReference type="Pfam" id="PF01443">
    <property type="entry name" value="Viral_helicase1"/>
    <property type="match status" value="1"/>
</dbReference>
<dbReference type="SUPFAM" id="SSF52540">
    <property type="entry name" value="P-loop containing nucleoside triphosphate hydrolases"/>
    <property type="match status" value="1"/>
</dbReference>
<dbReference type="PROSITE" id="PS51657">
    <property type="entry name" value="PSRV_HELICASE"/>
    <property type="match status" value="1"/>
</dbReference>
<gene>
    <name type="ORF">ORF2</name>
</gene>
<proteinExistence type="inferred from homology"/>
<keyword id="KW-1035">Host cytoplasm</keyword>
<keyword id="KW-0945">Host-virus interaction</keyword>
<keyword id="KW-1090">Inhibition of host innate immune response by virus</keyword>
<keyword id="KW-1185">Reference proteome</keyword>
<keyword id="KW-0694">RNA-binding</keyword>
<keyword id="KW-0941">Suppressor of RNA silencing</keyword>
<keyword id="KW-0813">Transport</keyword>
<keyword id="KW-0899">Viral immunoevasion</keyword>
<keyword id="KW-0916">Viral movement protein</keyword>